<sequence>MVSLKTEIAGFSFDNCLMNAAGIYCMTKEELLAIENSEAGSFVTKTGTLEAREGNPQPRYADTDWGSINSMGLPNKGIDYYLDFVTELQDQDNSKNHVLSLVGLSPEETHIILKKVENSSYNGLIELNLSCPNVPGKPQIAYDFEMTDLILSEIFSYYQKPLGIKLPPYFDIVHFDQAATIFNKYPLAFINCVNSIGNGLVIDDETVVIKPKNGFGGIGGDFIKPTALANVHAFYKRLNPSIKIIGTGGVKNGRDAFEHILCGASMVQIGTALQKEGPEIFQRVSRELKEIMADKGYQSLEDFRGQLNYL</sequence>
<organism>
    <name type="scientific">Streptococcus agalactiae serotype Ia (strain ATCC 27591 / A909 / CDC SS700)</name>
    <dbReference type="NCBI Taxonomy" id="205921"/>
    <lineage>
        <taxon>Bacteria</taxon>
        <taxon>Bacillati</taxon>
        <taxon>Bacillota</taxon>
        <taxon>Bacilli</taxon>
        <taxon>Lactobacillales</taxon>
        <taxon>Streptococcaceae</taxon>
        <taxon>Streptococcus</taxon>
    </lineage>
</organism>
<dbReference type="EC" id="1.3.98.1"/>
<dbReference type="EMBL" id="CP000114">
    <property type="protein sequence ID" value="ABA44965.1"/>
    <property type="molecule type" value="Genomic_DNA"/>
</dbReference>
<dbReference type="RefSeq" id="WP_000254063.1">
    <property type="nucleotide sequence ID" value="NC_007432.1"/>
</dbReference>
<dbReference type="SMR" id="Q3K2G4"/>
<dbReference type="KEGG" id="sak:SAK_0657"/>
<dbReference type="HOGENOM" id="CLU_042042_3_0_9"/>
<dbReference type="UniPathway" id="UPA00070"/>
<dbReference type="GO" id="GO:0005737">
    <property type="term" value="C:cytoplasm"/>
    <property type="evidence" value="ECO:0007669"/>
    <property type="project" value="UniProtKB-SubCell"/>
</dbReference>
<dbReference type="GO" id="GO:1990663">
    <property type="term" value="F:dihydroorotate dehydrogenase (fumarate) activity"/>
    <property type="evidence" value="ECO:0007669"/>
    <property type="project" value="UniProtKB-EC"/>
</dbReference>
<dbReference type="GO" id="GO:0006207">
    <property type="term" value="P:'de novo' pyrimidine nucleobase biosynthetic process"/>
    <property type="evidence" value="ECO:0007669"/>
    <property type="project" value="InterPro"/>
</dbReference>
<dbReference type="GO" id="GO:0044205">
    <property type="term" value="P:'de novo' UMP biosynthetic process"/>
    <property type="evidence" value="ECO:0007669"/>
    <property type="project" value="UniProtKB-UniRule"/>
</dbReference>
<dbReference type="CDD" id="cd04741">
    <property type="entry name" value="DHOD_1A_like"/>
    <property type="match status" value="1"/>
</dbReference>
<dbReference type="FunFam" id="3.20.20.70:FF:000027">
    <property type="entry name" value="Dihydropyrimidine dehydrogenase [NADP(+)]"/>
    <property type="match status" value="1"/>
</dbReference>
<dbReference type="Gene3D" id="3.20.20.70">
    <property type="entry name" value="Aldolase class I"/>
    <property type="match status" value="1"/>
</dbReference>
<dbReference type="HAMAP" id="MF_00224">
    <property type="entry name" value="DHO_dh_type1"/>
    <property type="match status" value="1"/>
</dbReference>
<dbReference type="InterPro" id="IPR013785">
    <property type="entry name" value="Aldolase_TIM"/>
</dbReference>
<dbReference type="InterPro" id="IPR050074">
    <property type="entry name" value="DHO_dehydrogenase"/>
</dbReference>
<dbReference type="InterPro" id="IPR033886">
    <property type="entry name" value="DHOD_1A"/>
</dbReference>
<dbReference type="InterPro" id="IPR024920">
    <property type="entry name" value="Dihydroorotate_DH_1"/>
</dbReference>
<dbReference type="InterPro" id="IPR012135">
    <property type="entry name" value="Dihydroorotate_DH_1_2"/>
</dbReference>
<dbReference type="InterPro" id="IPR005720">
    <property type="entry name" value="Dihydroorotate_DH_cat"/>
</dbReference>
<dbReference type="InterPro" id="IPR001295">
    <property type="entry name" value="Dihydroorotate_DH_CS"/>
</dbReference>
<dbReference type="NCBIfam" id="NF002702">
    <property type="entry name" value="PRK02506.1"/>
    <property type="match status" value="1"/>
</dbReference>
<dbReference type="PANTHER" id="PTHR48109:SF1">
    <property type="entry name" value="DIHYDROOROTATE DEHYDROGENASE (FUMARATE)"/>
    <property type="match status" value="1"/>
</dbReference>
<dbReference type="PANTHER" id="PTHR48109">
    <property type="entry name" value="DIHYDROOROTATE DEHYDROGENASE (QUINONE), MITOCHONDRIAL-RELATED"/>
    <property type="match status" value="1"/>
</dbReference>
<dbReference type="Pfam" id="PF01180">
    <property type="entry name" value="DHO_dh"/>
    <property type="match status" value="1"/>
</dbReference>
<dbReference type="PIRSF" id="PIRSF000164">
    <property type="entry name" value="DHO_oxidase"/>
    <property type="match status" value="1"/>
</dbReference>
<dbReference type="SUPFAM" id="SSF51395">
    <property type="entry name" value="FMN-linked oxidoreductases"/>
    <property type="match status" value="1"/>
</dbReference>
<dbReference type="PROSITE" id="PS00912">
    <property type="entry name" value="DHODEHASE_2"/>
    <property type="match status" value="1"/>
</dbReference>
<feature type="chain" id="PRO_1000100227" description="Putative dihydroorotate dehydrogenase A (fumarate)">
    <location>
        <begin position="1"/>
        <end position="310"/>
    </location>
</feature>
<feature type="active site" description="Nucleophile">
    <location>
        <position position="131"/>
    </location>
</feature>
<feature type="binding site" evidence="1">
    <location>
        <begin position="45"/>
        <end position="46"/>
    </location>
    <ligand>
        <name>FMN</name>
        <dbReference type="ChEBI" id="CHEBI:58210"/>
    </ligand>
</feature>
<feature type="binding site" evidence="1">
    <location>
        <position position="45"/>
    </location>
    <ligand>
        <name>substrate</name>
    </ligand>
</feature>
<feature type="binding site" evidence="1">
    <location>
        <begin position="69"/>
        <end position="73"/>
    </location>
    <ligand>
        <name>substrate</name>
    </ligand>
</feature>
<feature type="binding site" evidence="1">
    <location>
        <position position="128"/>
    </location>
    <ligand>
        <name>FMN</name>
        <dbReference type="ChEBI" id="CHEBI:58210"/>
    </ligand>
</feature>
<feature type="binding site" evidence="1">
    <location>
        <position position="128"/>
    </location>
    <ligand>
        <name>substrate</name>
    </ligand>
</feature>
<feature type="binding site" evidence="1">
    <location>
        <position position="165"/>
    </location>
    <ligand>
        <name>FMN</name>
        <dbReference type="ChEBI" id="CHEBI:58210"/>
    </ligand>
</feature>
<feature type="binding site" evidence="1">
    <location>
        <position position="193"/>
    </location>
    <ligand>
        <name>FMN</name>
        <dbReference type="ChEBI" id="CHEBI:58210"/>
    </ligand>
</feature>
<feature type="binding site" evidence="1">
    <location>
        <begin position="194"/>
        <end position="195"/>
    </location>
    <ligand>
        <name>substrate</name>
    </ligand>
</feature>
<feature type="binding site" evidence="1">
    <location>
        <position position="220"/>
    </location>
    <ligand>
        <name>FMN</name>
        <dbReference type="ChEBI" id="CHEBI:58210"/>
    </ligand>
</feature>
<feature type="binding site" evidence="1">
    <location>
        <begin position="248"/>
        <end position="249"/>
    </location>
    <ligand>
        <name>FMN</name>
        <dbReference type="ChEBI" id="CHEBI:58210"/>
    </ligand>
</feature>
<feature type="binding site" evidence="1">
    <location>
        <begin position="270"/>
        <end position="271"/>
    </location>
    <ligand>
        <name>FMN</name>
        <dbReference type="ChEBI" id="CHEBI:58210"/>
    </ligand>
</feature>
<comment type="function">
    <text evidence="1">Catalyzes the conversion of dihydroorotate to orotate with fumarate as the electron acceptor.</text>
</comment>
<comment type="catalytic activity">
    <reaction>
        <text>(S)-dihydroorotate + fumarate = orotate + succinate</text>
        <dbReference type="Rhea" id="RHEA:30059"/>
        <dbReference type="ChEBI" id="CHEBI:29806"/>
        <dbReference type="ChEBI" id="CHEBI:30031"/>
        <dbReference type="ChEBI" id="CHEBI:30839"/>
        <dbReference type="ChEBI" id="CHEBI:30864"/>
        <dbReference type="EC" id="1.3.98.1"/>
    </reaction>
</comment>
<comment type="cofactor">
    <cofactor evidence="1">
        <name>FMN</name>
        <dbReference type="ChEBI" id="CHEBI:58210"/>
    </cofactor>
    <text evidence="1">Binds 1 FMN per subunit.</text>
</comment>
<comment type="pathway">
    <text>Pyrimidine metabolism; UMP biosynthesis via de novo pathway.</text>
</comment>
<comment type="subunit">
    <text evidence="1">Homodimer.</text>
</comment>
<comment type="subcellular location">
    <subcellularLocation>
        <location evidence="1">Cytoplasm</location>
    </subcellularLocation>
</comment>
<comment type="similarity">
    <text evidence="2">Belongs to the dihydroorotate dehydrogenase family. Type 1 subfamily.</text>
</comment>
<evidence type="ECO:0000250" key="1"/>
<evidence type="ECO:0000305" key="2"/>
<keyword id="KW-0963">Cytoplasm</keyword>
<keyword id="KW-0285">Flavoprotein</keyword>
<keyword id="KW-0288">FMN</keyword>
<keyword id="KW-0560">Oxidoreductase</keyword>
<keyword id="KW-0665">Pyrimidine biosynthesis</keyword>
<reference key="1">
    <citation type="journal article" date="2005" name="Proc. Natl. Acad. Sci. U.S.A.">
        <title>Genome analysis of multiple pathogenic isolates of Streptococcus agalactiae: implications for the microbial 'pan-genome'.</title>
        <authorList>
            <person name="Tettelin H."/>
            <person name="Masignani V."/>
            <person name="Cieslewicz M.J."/>
            <person name="Donati C."/>
            <person name="Medini D."/>
            <person name="Ward N.L."/>
            <person name="Angiuoli S.V."/>
            <person name="Crabtree J."/>
            <person name="Jones A.L."/>
            <person name="Durkin A.S."/>
            <person name="DeBoy R.T."/>
            <person name="Davidsen T.M."/>
            <person name="Mora M."/>
            <person name="Scarselli M."/>
            <person name="Margarit y Ros I."/>
            <person name="Peterson J.D."/>
            <person name="Hauser C.R."/>
            <person name="Sundaram J.P."/>
            <person name="Nelson W.C."/>
            <person name="Madupu R."/>
            <person name="Brinkac L.M."/>
            <person name="Dodson R.J."/>
            <person name="Rosovitz M.J."/>
            <person name="Sullivan S.A."/>
            <person name="Daugherty S.C."/>
            <person name="Haft D.H."/>
            <person name="Selengut J."/>
            <person name="Gwinn M.L."/>
            <person name="Zhou L."/>
            <person name="Zafar N."/>
            <person name="Khouri H."/>
            <person name="Radune D."/>
            <person name="Dimitrov G."/>
            <person name="Watkins K."/>
            <person name="O'Connor K.J."/>
            <person name="Smith S."/>
            <person name="Utterback T.R."/>
            <person name="White O."/>
            <person name="Rubens C.E."/>
            <person name="Grandi G."/>
            <person name="Madoff L.C."/>
            <person name="Kasper D.L."/>
            <person name="Telford J.L."/>
            <person name="Wessels M.R."/>
            <person name="Rappuoli R."/>
            <person name="Fraser C.M."/>
        </authorList>
    </citation>
    <scope>NUCLEOTIDE SEQUENCE [LARGE SCALE GENOMIC DNA]</scope>
    <source>
        <strain>ATCC 27591 / A909 / CDC SS700</strain>
    </source>
</reference>
<gene>
    <name type="primary">pyrD</name>
    <name type="ordered locus">SAK_0657</name>
</gene>
<protein>
    <recommendedName>
        <fullName>Putative dihydroorotate dehydrogenase A (fumarate)</fullName>
        <shortName>DHOD A</shortName>
        <shortName>DHODase A</shortName>
        <shortName>DHOdehase A</shortName>
        <ecNumber>1.3.98.1</ecNumber>
    </recommendedName>
</protein>
<proteinExistence type="inferred from homology"/>
<accession>Q3K2G4</accession>
<name>PYRDA_STRA1</name>